<organism>
    <name type="scientific">Methanothermobacter thermautotrophicus (strain ATCC 29096 / DSM 1053 / JCM 10044 / NBRC 100330 / Delta H)</name>
    <name type="common">Methanobacterium thermoautotrophicum</name>
    <dbReference type="NCBI Taxonomy" id="187420"/>
    <lineage>
        <taxon>Archaea</taxon>
        <taxon>Methanobacteriati</taxon>
        <taxon>Methanobacteriota</taxon>
        <taxon>Methanomada group</taxon>
        <taxon>Methanobacteria</taxon>
        <taxon>Methanobacteriales</taxon>
        <taxon>Methanobacteriaceae</taxon>
        <taxon>Methanothermobacter</taxon>
    </lineage>
</organism>
<sequence length="78" mass="9280">MKMKTKIFRVKGKFLMGDKLQPFTKELNAIREEEIYERLYSEFGSKHRVPRSKVKIEEIEEISPEEVQDPVVKALVQR</sequence>
<keyword id="KW-0002">3D-structure</keyword>
<keyword id="KW-1185">Reference proteome</keyword>
<keyword id="KW-0687">Ribonucleoprotein</keyword>
<keyword id="KW-0689">Ribosomal protein</keyword>
<keyword id="KW-0694">RNA-binding</keyword>
<keyword id="KW-0699">rRNA-binding</keyword>
<proteinExistence type="evidence at protein level"/>
<protein>
    <recommendedName>
        <fullName evidence="1">Large ribosomal subunit protein eL20</fullName>
    </recommendedName>
    <alternativeName>
        <fullName evidence="2">50S ribosomal protein L18Ae</fullName>
    </alternativeName>
    <alternativeName>
        <fullName evidence="1">50S ribosomal protein L20e</fullName>
    </alternativeName>
    <alternativeName>
        <fullName evidence="1">50S ribosomal protein LX</fullName>
    </alternativeName>
</protein>
<comment type="subunit">
    <text evidence="1">Part of the 50S ribosomal subunit. Binds 23S rRNA.</text>
</comment>
<comment type="similarity">
    <text evidence="1">Belongs to the eukaryotic ribosomal protein eL20 family.</text>
</comment>
<name>RL18A_METTH</name>
<gene>
    <name evidence="1" type="primary">rpl18a</name>
    <name evidence="1" type="synonym">rpl20e</name>
    <name evidence="1" type="synonym">rplX</name>
    <name type="ordered locus">MTH_1610</name>
</gene>
<reference key="1">
    <citation type="journal article" date="1997" name="J. Bacteriol.">
        <title>Complete genome sequence of Methanobacterium thermoautotrophicum deltaH: functional analysis and comparative genomics.</title>
        <authorList>
            <person name="Smith D.R."/>
            <person name="Doucette-Stamm L.A."/>
            <person name="Deloughery C."/>
            <person name="Lee H.-M."/>
            <person name="Dubois J."/>
            <person name="Aldredge T."/>
            <person name="Bashirzadeh R."/>
            <person name="Blakely D."/>
            <person name="Cook R."/>
            <person name="Gilbert K."/>
            <person name="Harrison D."/>
            <person name="Hoang L."/>
            <person name="Keagle P."/>
            <person name="Lumm W."/>
            <person name="Pothier B."/>
            <person name="Qiu D."/>
            <person name="Spadafora R."/>
            <person name="Vicare R."/>
            <person name="Wang Y."/>
            <person name="Wierzbowski J."/>
            <person name="Gibson R."/>
            <person name="Jiwani N."/>
            <person name="Caruso A."/>
            <person name="Bush D."/>
            <person name="Safer H."/>
            <person name="Patwell D."/>
            <person name="Prabhakar S."/>
            <person name="McDougall S."/>
            <person name="Shimer G."/>
            <person name="Goyal A."/>
            <person name="Pietrovski S."/>
            <person name="Church G.M."/>
            <person name="Daniels C.J."/>
            <person name="Mao J.-I."/>
            <person name="Rice P."/>
            <person name="Noelling J."/>
            <person name="Reeve J.N."/>
        </authorList>
    </citation>
    <scope>NUCLEOTIDE SEQUENCE [LARGE SCALE GENOMIC DNA]</scope>
    <source>
        <strain>ATCC 29096 / DSM 1053 / JCM 10044 / NBRC 100330 / Delta H</strain>
    </source>
</reference>
<reference key="2">
    <citation type="submission" date="2011-07" db="PDB data bank">
        <title>Solution structure of 50s ribosomal protein LX from Methanobacterium thermoautotrophicum.</title>
        <authorList>
            <consortium name="Northeast structural genomics consortium (NESG)"/>
        </authorList>
    </citation>
    <scope>STRUCTURE BY NMR</scope>
</reference>
<feature type="chain" id="PRO_0000153702" description="Large ribosomal subunit protein eL20">
    <location>
        <begin position="1"/>
        <end position="78"/>
    </location>
</feature>
<feature type="strand" evidence="3">
    <location>
        <begin position="6"/>
        <end position="16"/>
    </location>
</feature>
<feature type="strand" evidence="3">
    <location>
        <begin position="19"/>
        <end position="31"/>
    </location>
</feature>
<feature type="helix" evidence="3">
    <location>
        <begin position="32"/>
        <end position="46"/>
    </location>
</feature>
<feature type="helix" evidence="3">
    <location>
        <begin position="51"/>
        <end position="53"/>
    </location>
</feature>
<feature type="strand" evidence="3">
    <location>
        <begin position="54"/>
        <end position="62"/>
    </location>
</feature>
<feature type="helix" evidence="3">
    <location>
        <begin position="64"/>
        <end position="66"/>
    </location>
</feature>
<feature type="helix" evidence="3">
    <location>
        <begin position="70"/>
        <end position="77"/>
    </location>
</feature>
<accession>O27647</accession>
<evidence type="ECO:0000255" key="1">
    <source>
        <dbReference type="HAMAP-Rule" id="MF_00273"/>
    </source>
</evidence>
<evidence type="ECO:0000305" key="2"/>
<evidence type="ECO:0007829" key="3">
    <source>
        <dbReference type="PDB" id="2JXT"/>
    </source>
</evidence>
<dbReference type="EMBL" id="AE000666">
    <property type="protein sequence ID" value="AAB86083.1"/>
    <property type="molecule type" value="Genomic_DNA"/>
</dbReference>
<dbReference type="PIR" id="B69082">
    <property type="entry name" value="B69082"/>
</dbReference>
<dbReference type="PDB" id="2JXT">
    <property type="method" value="NMR"/>
    <property type="chains" value="A=1-78"/>
</dbReference>
<dbReference type="PDB" id="4ADX">
    <property type="method" value="EM"/>
    <property type="resolution" value="6.60 A"/>
    <property type="chains" value="G=1-78"/>
</dbReference>
<dbReference type="PDBsum" id="2JXT"/>
<dbReference type="PDBsum" id="4ADX"/>
<dbReference type="BMRB" id="O27647"/>
<dbReference type="SMR" id="O27647"/>
<dbReference type="FunCoup" id="O27647">
    <property type="interactions" value="57"/>
</dbReference>
<dbReference type="STRING" id="187420.MTH_1610"/>
<dbReference type="PaxDb" id="187420-MTH_1610"/>
<dbReference type="EnsemblBacteria" id="AAB86083">
    <property type="protein sequence ID" value="AAB86083"/>
    <property type="gene ID" value="MTH_1610"/>
</dbReference>
<dbReference type="KEGG" id="mth:MTH_1610"/>
<dbReference type="HOGENOM" id="CLU_177460_0_1_2"/>
<dbReference type="InParanoid" id="O27647"/>
<dbReference type="EvolutionaryTrace" id="O27647"/>
<dbReference type="Proteomes" id="UP000005223">
    <property type="component" value="Chromosome"/>
</dbReference>
<dbReference type="GO" id="GO:1990904">
    <property type="term" value="C:ribonucleoprotein complex"/>
    <property type="evidence" value="ECO:0007669"/>
    <property type="project" value="UniProtKB-KW"/>
</dbReference>
<dbReference type="GO" id="GO:0005840">
    <property type="term" value="C:ribosome"/>
    <property type="evidence" value="ECO:0007669"/>
    <property type="project" value="UniProtKB-KW"/>
</dbReference>
<dbReference type="GO" id="GO:0070180">
    <property type="term" value="F:large ribosomal subunit rRNA binding"/>
    <property type="evidence" value="ECO:0007669"/>
    <property type="project" value="UniProtKB-UniRule"/>
</dbReference>
<dbReference type="GO" id="GO:0003735">
    <property type="term" value="F:structural constituent of ribosome"/>
    <property type="evidence" value="ECO:0007669"/>
    <property type="project" value="InterPro"/>
</dbReference>
<dbReference type="GO" id="GO:0006412">
    <property type="term" value="P:translation"/>
    <property type="evidence" value="ECO:0007669"/>
    <property type="project" value="UniProtKB-UniRule"/>
</dbReference>
<dbReference type="Gene3D" id="3.10.20.10">
    <property type="match status" value="1"/>
</dbReference>
<dbReference type="HAMAP" id="MF_00273">
    <property type="entry name" value="Ribosomal_eL20"/>
    <property type="match status" value="1"/>
</dbReference>
<dbReference type="InterPro" id="IPR028877">
    <property type="entry name" value="Ribosomal_eL20"/>
</dbReference>
<dbReference type="InterPro" id="IPR023573">
    <property type="entry name" value="Ribosomal_eL20_dom"/>
</dbReference>
<dbReference type="NCBIfam" id="NF001981">
    <property type="entry name" value="PRK00773.1-1"/>
    <property type="match status" value="1"/>
</dbReference>
<dbReference type="Pfam" id="PF01775">
    <property type="entry name" value="Ribosomal_L18A"/>
    <property type="match status" value="1"/>
</dbReference>
<dbReference type="SUPFAM" id="SSF160374">
    <property type="entry name" value="RplX-like"/>
    <property type="match status" value="1"/>
</dbReference>